<sequence>MERIKELRNLMSQSRTREILTKTTVDHMAIIKKYTSGRQEKNPSLRMKWMMAMKYPITADKRITEMVPERNEQGQTLWSKMSDAGSDRVMVSPLAVTWWNRNGPVTSTVHYPKVYKTYFDKVERLKHGTFGPVHFRNQVKIRRRVDINPGHADLSAKEAQDVIMEVVFPNEVGARILTSESQLTITKEKKEELQDCKISPLMVAYMLERELVRKTRFLPVAGGTSSVYIEVLHLTQGTCWEQMYTPGGEVRNDDIDQSLIIAARNIVRRASVSADPLASLLEMCHSTQIGGTRMVDILRQNPTEEQAVDICKAAMGLRISSSFSFGGFTFKRTSGSSIKREEEVLTGNLQTLKIRVHEGYEEFTMVGKRATAILRKATRRLVQLIVSGRDEQSIAEAIIVAMVFSQEDCMIKAVRGDLNFVNRANQRLNPMHQLLRHFQKDAKVLFQNWGIEHIDNVMGMVGVLPDMTPSTEMSMRGIRVSKMGVDEYSSTERVVVSIDRFLRVRDQRGNVLLSPEEVSETHGTERLTITYSSSMMWEINGPESVLVNTYQWIIRNWETVKIQWSQNPTMLYNKMEFEPFQSLVPKAIRGQYSGFVRTLFQQMRDVLGTFDTTQIIKLLPFAAAPPKQSRMQFSSLTVNVRGSGMRILVRGNSPVFNYNKTTKRLTILGKDAGTLIEDPDESTSGVESAVLRGFLILGKEDRRYGPALSINELSNLAKGEKANVLIGQGDVVLVMKRKRDSSILTDSQTATKRIRMAIN</sequence>
<evidence type="ECO:0000255" key="1">
    <source>
        <dbReference type="HAMAP-Rule" id="MF_04062"/>
    </source>
</evidence>
<evidence type="ECO:0007829" key="2">
    <source>
        <dbReference type="PDB" id="2GMO"/>
    </source>
</evidence>
<evidence type="ECO:0007829" key="3">
    <source>
        <dbReference type="PDB" id="2VQZ"/>
    </source>
</evidence>
<evidence type="ECO:0007829" key="4">
    <source>
        <dbReference type="PDB" id="2VY8"/>
    </source>
</evidence>
<evidence type="ECO:0007829" key="5">
    <source>
        <dbReference type="PDB" id="4NCE"/>
    </source>
</evidence>
<evidence type="ECO:0007829" key="6">
    <source>
        <dbReference type="PDB" id="4UAF"/>
    </source>
</evidence>
<evidence type="ECO:0007829" key="7">
    <source>
        <dbReference type="PDB" id="6EUV"/>
    </source>
</evidence>
<evidence type="ECO:0007829" key="8">
    <source>
        <dbReference type="PDB" id="6EUY"/>
    </source>
</evidence>
<organismHost>
    <name type="scientific">Aves</name>
    <dbReference type="NCBI Taxonomy" id="8782"/>
</organismHost>
<organismHost>
    <name type="scientific">Cetacea</name>
    <name type="common">whales</name>
    <dbReference type="NCBI Taxonomy" id="9721"/>
</organismHost>
<organismHost>
    <name type="scientific">Homo sapiens</name>
    <name type="common">Human</name>
    <dbReference type="NCBI Taxonomy" id="9606"/>
</organismHost>
<organismHost>
    <name type="scientific">Phocidae</name>
    <name type="common">true seals</name>
    <dbReference type="NCBI Taxonomy" id="9709"/>
</organismHost>
<organismHost>
    <name type="scientific">Sus scrofa</name>
    <name type="common">Pig</name>
    <dbReference type="NCBI Taxonomy" id="9823"/>
</organismHost>
<name>PB2_I75A3</name>
<feature type="chain" id="PRO_0000078840" description="Polymerase basic protein 2">
    <location>
        <begin position="1"/>
        <end position="759"/>
    </location>
</feature>
<feature type="short sequence motif" description="Nuclear localization signal" evidence="1">
    <location>
        <begin position="736"/>
        <end position="739"/>
    </location>
</feature>
<feature type="site" description="Mammalian adaptation" evidence="1">
    <location>
        <position position="627"/>
    </location>
</feature>
<feature type="helix" evidence="7">
    <location>
        <begin position="253"/>
        <end position="270"/>
    </location>
</feature>
<feature type="strand" evidence="7">
    <location>
        <begin position="273"/>
        <end position="275"/>
    </location>
</feature>
<feature type="helix" evidence="7">
    <location>
        <begin position="276"/>
        <end position="285"/>
    </location>
</feature>
<feature type="helix" evidence="7">
    <location>
        <begin position="294"/>
        <end position="300"/>
    </location>
</feature>
<feature type="helix" evidence="7">
    <location>
        <begin position="306"/>
        <end position="314"/>
    </location>
</feature>
<feature type="strand" evidence="7">
    <location>
        <begin position="319"/>
        <end position="321"/>
    </location>
</feature>
<feature type="strand" evidence="3">
    <location>
        <begin position="322"/>
        <end position="325"/>
    </location>
</feature>
<feature type="strand" evidence="3">
    <location>
        <begin position="328"/>
        <end position="335"/>
    </location>
</feature>
<feature type="strand" evidence="3">
    <location>
        <begin position="338"/>
        <end position="345"/>
    </location>
</feature>
<feature type="strand" evidence="3">
    <location>
        <begin position="351"/>
        <end position="359"/>
    </location>
</feature>
<feature type="strand" evidence="3">
    <location>
        <begin position="361"/>
        <end position="366"/>
    </location>
</feature>
<feature type="strand" evidence="3">
    <location>
        <begin position="368"/>
        <end position="377"/>
    </location>
</feature>
<feature type="strand" evidence="3">
    <location>
        <begin position="380"/>
        <end position="390"/>
    </location>
</feature>
<feature type="helix" evidence="3">
    <location>
        <begin position="391"/>
        <end position="404"/>
    </location>
</feature>
<feature type="helix" evidence="3">
    <location>
        <begin position="408"/>
        <end position="411"/>
    </location>
</feature>
<feature type="helix" evidence="5">
    <location>
        <begin position="423"/>
        <end position="425"/>
    </location>
</feature>
<feature type="helix" evidence="3">
    <location>
        <begin position="430"/>
        <end position="440"/>
    </location>
</feature>
<feature type="helix" evidence="3">
    <location>
        <begin position="443"/>
        <end position="448"/>
    </location>
</feature>
<feature type="strand" evidence="3">
    <location>
        <begin position="451"/>
        <end position="453"/>
    </location>
</feature>
<feature type="strand" evidence="3">
    <location>
        <begin position="460"/>
        <end position="463"/>
    </location>
</feature>
<feature type="strand" evidence="3">
    <location>
        <begin position="469"/>
        <end position="475"/>
    </location>
</feature>
<feature type="strand" evidence="3">
    <location>
        <begin position="478"/>
        <end position="481"/>
    </location>
</feature>
<feature type="strand" evidence="7">
    <location>
        <begin position="497"/>
        <end position="499"/>
    </location>
</feature>
<feature type="strand" evidence="7">
    <location>
        <begin position="511"/>
        <end position="513"/>
    </location>
</feature>
<feature type="helix" evidence="7">
    <location>
        <begin position="515"/>
        <end position="517"/>
    </location>
</feature>
<feature type="strand" evidence="8">
    <location>
        <begin position="529"/>
        <end position="531"/>
    </location>
</feature>
<feature type="helix" evidence="4">
    <location>
        <begin position="541"/>
        <end position="555"/>
    </location>
</feature>
<feature type="helix" evidence="4">
    <location>
        <begin position="557"/>
        <end position="566"/>
    </location>
</feature>
<feature type="helix" evidence="4">
    <location>
        <begin position="568"/>
        <end position="572"/>
    </location>
</feature>
<feature type="helix" evidence="4">
    <location>
        <begin position="575"/>
        <end position="577"/>
    </location>
</feature>
<feature type="helix" evidence="4">
    <location>
        <begin position="578"/>
        <end position="583"/>
    </location>
</feature>
<feature type="turn" evidence="4">
    <location>
        <begin position="586"/>
        <end position="588"/>
    </location>
</feature>
<feature type="helix" evidence="4">
    <location>
        <begin position="589"/>
        <end position="607"/>
    </location>
</feature>
<feature type="helix" evidence="4">
    <location>
        <begin position="612"/>
        <end position="618"/>
    </location>
</feature>
<feature type="helix" evidence="4">
    <location>
        <begin position="619"/>
        <end position="622"/>
    </location>
</feature>
<feature type="strand" evidence="4">
    <location>
        <begin position="634"/>
        <end position="638"/>
    </location>
</feature>
<feature type="strand" evidence="4">
    <location>
        <begin position="645"/>
        <end position="651"/>
    </location>
</feature>
<feature type="strand" evidence="4">
    <location>
        <begin position="654"/>
        <end position="659"/>
    </location>
</feature>
<feature type="turn" evidence="4">
    <location>
        <begin position="660"/>
        <end position="663"/>
    </location>
</feature>
<feature type="strand" evidence="4">
    <location>
        <begin position="664"/>
        <end position="667"/>
    </location>
</feature>
<feature type="strand" evidence="4">
    <location>
        <begin position="670"/>
        <end position="674"/>
    </location>
</feature>
<feature type="helix" evidence="6">
    <location>
        <begin position="688"/>
        <end position="691"/>
    </location>
</feature>
<feature type="strand" evidence="6">
    <location>
        <begin position="694"/>
        <end position="699"/>
    </location>
</feature>
<feature type="helix" evidence="6">
    <location>
        <begin position="702"/>
        <end position="704"/>
    </location>
</feature>
<feature type="helix" evidence="6">
    <location>
        <begin position="710"/>
        <end position="713"/>
    </location>
</feature>
<feature type="strand" evidence="6">
    <location>
        <begin position="721"/>
        <end position="726"/>
    </location>
</feature>
<feature type="turn" evidence="6">
    <location>
        <begin position="727"/>
        <end position="729"/>
    </location>
</feature>
<feature type="strand" evidence="6">
    <location>
        <begin position="730"/>
        <end position="738"/>
    </location>
</feature>
<feature type="turn" evidence="6">
    <location>
        <begin position="745"/>
        <end position="747"/>
    </location>
</feature>
<feature type="strand" evidence="2">
    <location>
        <begin position="751"/>
        <end position="753"/>
    </location>
</feature>
<reference key="1">
    <citation type="journal article" date="1989" name="Virus Res.">
        <title>Molecular cloning and sequencing of influenza virus A/Victoria/3/75 polymerase genes: sequence evolution and prediction of possible functional domains.</title>
        <authorList>
            <person name="de la Luna S."/>
            <person name="Martinez C."/>
            <person name="Ortin J."/>
        </authorList>
    </citation>
    <scope>NUCLEOTIDE SEQUENCE</scope>
</reference>
<proteinExistence type="evidence at protein level"/>
<dbReference type="PIR" id="B60008">
    <property type="entry name" value="B60008"/>
</dbReference>
<dbReference type="PDB" id="2GMO">
    <property type="method" value="NMR"/>
    <property type="chains" value="A=678-759"/>
</dbReference>
<dbReference type="PDB" id="2JDQ">
    <property type="method" value="X-ray"/>
    <property type="resolution" value="2.20 A"/>
    <property type="chains" value="D/E=678-759"/>
</dbReference>
<dbReference type="PDB" id="2VQZ">
    <property type="method" value="X-ray"/>
    <property type="resolution" value="2.30 A"/>
    <property type="chains" value="A/B/D/E/F=318-483"/>
</dbReference>
<dbReference type="PDB" id="2VY6">
    <property type="method" value="X-ray"/>
    <property type="resolution" value="1.95 A"/>
    <property type="chains" value="A=538-753"/>
</dbReference>
<dbReference type="PDB" id="2VY7">
    <property type="method" value="X-ray"/>
    <property type="resolution" value="1.53 A"/>
    <property type="chains" value="A=538-693"/>
</dbReference>
<dbReference type="PDB" id="2VY8">
    <property type="method" value="X-ray"/>
    <property type="resolution" value="1.20 A"/>
    <property type="chains" value="A=538-693"/>
</dbReference>
<dbReference type="PDB" id="4NCE">
    <property type="method" value="X-ray"/>
    <property type="resolution" value="2.30 A"/>
    <property type="chains" value="A=318-483"/>
</dbReference>
<dbReference type="PDB" id="4NCM">
    <property type="method" value="X-ray"/>
    <property type="resolution" value="2.82 A"/>
    <property type="chains" value="A=318-483"/>
</dbReference>
<dbReference type="PDB" id="4P1U">
    <property type="method" value="X-ray"/>
    <property type="resolution" value="2.52 A"/>
    <property type="chains" value="A=318-483"/>
</dbReference>
<dbReference type="PDB" id="4UAD">
    <property type="method" value="X-ray"/>
    <property type="resolution" value="2.42 A"/>
    <property type="chains" value="E=683-759"/>
</dbReference>
<dbReference type="PDB" id="4UAE">
    <property type="method" value="X-ray"/>
    <property type="resolution" value="2.70 A"/>
    <property type="chains" value="F=678-759"/>
</dbReference>
<dbReference type="PDB" id="4UAF">
    <property type="method" value="X-ray"/>
    <property type="resolution" value="1.70 A"/>
    <property type="chains" value="E=678-759"/>
</dbReference>
<dbReference type="PDB" id="6EUV">
    <property type="method" value="X-ray"/>
    <property type="resolution" value="2.70 A"/>
    <property type="chains" value="A/C/F/I=247-536"/>
</dbReference>
<dbReference type="PDB" id="6EUY">
    <property type="method" value="X-ray"/>
    <property type="resolution" value="3.00 A"/>
    <property type="chains" value="A/B/C=247-536"/>
</dbReference>
<dbReference type="PDB" id="7XME">
    <property type="method" value="X-ray"/>
    <property type="resolution" value="2.52 A"/>
    <property type="chains" value="A/B/C/D=318-483"/>
</dbReference>
<dbReference type="PDBsum" id="2GMO"/>
<dbReference type="PDBsum" id="2JDQ"/>
<dbReference type="PDBsum" id="2VQZ"/>
<dbReference type="PDBsum" id="2VY6"/>
<dbReference type="PDBsum" id="2VY7"/>
<dbReference type="PDBsum" id="2VY8"/>
<dbReference type="PDBsum" id="4NCE"/>
<dbReference type="PDBsum" id="4NCM"/>
<dbReference type="PDBsum" id="4P1U"/>
<dbReference type="PDBsum" id="4UAD"/>
<dbReference type="PDBsum" id="4UAE"/>
<dbReference type="PDBsum" id="4UAF"/>
<dbReference type="PDBsum" id="6EUV"/>
<dbReference type="PDBsum" id="6EUY"/>
<dbReference type="PDBsum" id="7XME"/>
<dbReference type="SMR" id="P31345"/>
<dbReference type="DIP" id="DIP-29297N"/>
<dbReference type="IntAct" id="P31345">
    <property type="interactions" value="7"/>
</dbReference>
<dbReference type="EvolutionaryTrace" id="P31345"/>
<dbReference type="GO" id="GO:0033650">
    <property type="term" value="C:host cell mitochondrion"/>
    <property type="evidence" value="ECO:0007669"/>
    <property type="project" value="UniProtKB-SubCell"/>
</dbReference>
<dbReference type="GO" id="GO:0042025">
    <property type="term" value="C:host cell nucleus"/>
    <property type="evidence" value="ECO:0007669"/>
    <property type="project" value="UniProtKB-SubCell"/>
</dbReference>
<dbReference type="GO" id="GO:0044423">
    <property type="term" value="C:virion component"/>
    <property type="evidence" value="ECO:0007669"/>
    <property type="project" value="UniProtKB-UniRule"/>
</dbReference>
<dbReference type="GO" id="GO:0003723">
    <property type="term" value="F:RNA binding"/>
    <property type="evidence" value="ECO:0007669"/>
    <property type="project" value="UniProtKB-UniRule"/>
</dbReference>
<dbReference type="GO" id="GO:0003968">
    <property type="term" value="F:RNA-directed RNA polymerase activity"/>
    <property type="evidence" value="ECO:0007669"/>
    <property type="project" value="UniProtKB-UniRule"/>
</dbReference>
<dbReference type="GO" id="GO:0006370">
    <property type="term" value="P:7-methylguanosine mRNA capping"/>
    <property type="evidence" value="ECO:0007669"/>
    <property type="project" value="UniProtKB-UniRule"/>
</dbReference>
<dbReference type="GO" id="GO:0075526">
    <property type="term" value="P:cap snatching"/>
    <property type="evidence" value="ECO:0007669"/>
    <property type="project" value="UniProtKB-UniRule"/>
</dbReference>
<dbReference type="GO" id="GO:0006351">
    <property type="term" value="P:DNA-templated transcription"/>
    <property type="evidence" value="ECO:0007669"/>
    <property type="project" value="UniProtKB-UniRule"/>
</dbReference>
<dbReference type="GO" id="GO:0039545">
    <property type="term" value="P:symbiont-mediated suppression of host cytoplasmic pattern recognition receptor signaling pathway via inhibition of MAVS activity"/>
    <property type="evidence" value="ECO:0007669"/>
    <property type="project" value="UniProtKB-UniRule"/>
</dbReference>
<dbReference type="GO" id="GO:0039657">
    <property type="term" value="P:symbiont-mediated suppression of host gene expression"/>
    <property type="evidence" value="ECO:0007669"/>
    <property type="project" value="UniProtKB-KW"/>
</dbReference>
<dbReference type="GO" id="GO:0039523">
    <property type="term" value="P:symbiont-mediated suppression of host mRNA transcription via inhibition of RNA polymerase II activity"/>
    <property type="evidence" value="ECO:0007669"/>
    <property type="project" value="UniProtKB-UniRule"/>
</dbReference>
<dbReference type="GO" id="GO:0039694">
    <property type="term" value="P:viral RNA genome replication"/>
    <property type="evidence" value="ECO:0007669"/>
    <property type="project" value="InterPro"/>
</dbReference>
<dbReference type="FunFam" id="3.30.30.90:FF:000001">
    <property type="entry name" value="Polymerase basic protein 2"/>
    <property type="match status" value="1"/>
</dbReference>
<dbReference type="Gene3D" id="3.30.30.90">
    <property type="entry name" value="Polymerase Basic Protein 2, C-terminal domain"/>
    <property type="match status" value="1"/>
</dbReference>
<dbReference type="HAMAP" id="MF_04062">
    <property type="entry name" value="INV_PB2"/>
    <property type="match status" value="1"/>
</dbReference>
<dbReference type="InterPro" id="IPR049110">
    <property type="entry name" value="Flu_PB2_2nd"/>
</dbReference>
<dbReference type="InterPro" id="IPR049114">
    <property type="entry name" value="Flu_PB2_6th"/>
</dbReference>
<dbReference type="InterPro" id="IPR049115">
    <property type="entry name" value="Flu_PB2_C"/>
</dbReference>
<dbReference type="InterPro" id="IPR048298">
    <property type="entry name" value="Flu_PB2_CAP-bd"/>
</dbReference>
<dbReference type="InterPro" id="IPR049111">
    <property type="entry name" value="Flu_PB2_middle"/>
</dbReference>
<dbReference type="InterPro" id="IPR049106">
    <property type="entry name" value="Flu_PB2_N"/>
</dbReference>
<dbReference type="InterPro" id="IPR001591">
    <property type="entry name" value="INV_PB2"/>
</dbReference>
<dbReference type="InterPro" id="IPR049113">
    <property type="entry name" value="PB2_helical"/>
</dbReference>
<dbReference type="InterPro" id="IPR037258">
    <property type="entry name" value="PDB2_C"/>
</dbReference>
<dbReference type="Pfam" id="PF20947">
    <property type="entry name" value="Flu_PB2_1st"/>
    <property type="match status" value="1"/>
</dbReference>
<dbReference type="Pfam" id="PF20948">
    <property type="entry name" value="Flu_PB2_2nd"/>
    <property type="match status" value="1"/>
</dbReference>
<dbReference type="Pfam" id="PF20949">
    <property type="entry name" value="Flu_PB2_3rd"/>
    <property type="match status" value="1"/>
</dbReference>
<dbReference type="Pfam" id="PF20950">
    <property type="entry name" value="Flu_PB2_4th"/>
    <property type="match status" value="1"/>
</dbReference>
<dbReference type="Pfam" id="PF00604">
    <property type="entry name" value="Flu_PB2_5th"/>
    <property type="match status" value="1"/>
</dbReference>
<dbReference type="Pfam" id="PF20951">
    <property type="entry name" value="Flu_PB2_6th"/>
    <property type="match status" value="1"/>
</dbReference>
<dbReference type="Pfam" id="PF20952">
    <property type="entry name" value="Flu_PB2_7th"/>
    <property type="match status" value="1"/>
</dbReference>
<dbReference type="SUPFAM" id="SSF160453">
    <property type="entry name" value="PB2 C-terminal domain-like"/>
    <property type="match status" value="1"/>
</dbReference>
<gene>
    <name evidence="1" type="primary">PB2</name>
</gene>
<comment type="function">
    <text evidence="1">Plays an essential role in transcription initiation and cap-stealing mechanism, in which cellular capped pre-mRNAs are used to generate primers for viral transcription. Recognizes and binds the 7-methylguanosine-containing cap of the target pre-RNA which is subsequently cleaved after 10-13 nucleotides by the viral protein PA. Plays a role in the initiation of the viral genome replication and modulates the activity of the ribonucleoprotein (RNP) complex. In addition, participates in the inhibition of type I interferon induction through interaction with and inhibition of the host mitochondrial antiviral signaling protein MAVS.</text>
</comment>
<comment type="subunit">
    <text evidence="1">Influenza RNA polymerase is composed of three subunits: PB1, PB2 and PA. Interacts (via N-terminus) with PB1 (via C-terminus). Interacts with nucleoprotein NP (via N-terminus). Interacts (via N-terminus) with host MAVS (via N-terminus); this interaction inhibits host innate immune response.</text>
</comment>
<comment type="interaction">
    <interactant intactId="EBI-6051231">
        <id>P31345</id>
    </interactant>
    <interactant intactId="EBI-358383">
        <id>P52294</id>
        <label>KPNA1</label>
    </interactant>
    <organismsDiffer>true</organismsDiffer>
    <experiments>3</experiments>
</comment>
<comment type="interaction">
    <interactant intactId="EBI-6051231">
        <id>P31345</id>
    </interactant>
    <interactant intactId="EBI-3043908">
        <id>P52293</id>
        <label>Kpna2</label>
    </interactant>
    <organismsDiffer>true</organismsDiffer>
    <experiments>3</experiments>
</comment>
<comment type="interaction">
    <interactant intactId="EBI-6051231">
        <id>P31345</id>
    </interactant>
    <interactant intactId="EBI-396343">
        <id>O00629</id>
        <label>KPNA4</label>
    </interactant>
    <organismsDiffer>true</organismsDiffer>
    <experiments>3</experiments>
</comment>
<comment type="interaction">
    <interactant intactId="EBI-6051231">
        <id>P31345</id>
    </interactant>
    <interactant intactId="EBI-359923">
        <id>O60684</id>
        <label>KPNA6</label>
    </interactant>
    <organismsDiffer>true</organismsDiffer>
    <experiments>3</experiments>
</comment>
<comment type="subcellular location">
    <subcellularLocation>
        <location evidence="1">Virion</location>
    </subcellularLocation>
    <subcellularLocation>
        <location evidence="1">Host nucleus</location>
    </subcellularLocation>
    <subcellularLocation>
        <location evidence="1">Host mitochondrion</location>
    </subcellularLocation>
</comment>
<comment type="similarity">
    <text evidence="1">Belongs to the influenza viruses PB2 family.</text>
</comment>
<keyword id="KW-0002">3D-structure</keyword>
<keyword id="KW-1157">Cap snatching</keyword>
<keyword id="KW-1262">Eukaryotic host gene expression shutoff by virus</keyword>
<keyword id="KW-1191">Eukaryotic host transcription shutoff by virus</keyword>
<keyword id="KW-1190">Host gene expression shutoff by virus</keyword>
<keyword id="KW-1045">Host mitochondrion</keyword>
<keyword id="KW-1048">Host nucleus</keyword>
<keyword id="KW-0945">Host-virus interaction</keyword>
<keyword id="KW-1090">Inhibition of host innate immune response by virus</keyword>
<keyword id="KW-1097">Inhibition of host MAVS by virus</keyword>
<keyword id="KW-1113">Inhibition of host RLR pathway by virus</keyword>
<keyword id="KW-1104">Inhibition of host RNA polymerase II by virus</keyword>
<keyword id="KW-0506">mRNA capping</keyword>
<keyword id="KW-0507">mRNA processing</keyword>
<keyword id="KW-0899">Viral immunoevasion</keyword>
<keyword id="KW-1195">Viral transcription</keyword>
<keyword id="KW-0946">Virion</keyword>
<organism>
    <name type="scientific">Influenza A virus (strain A/Victoria/3/1975 H3N2)</name>
    <dbReference type="NCBI Taxonomy" id="392809"/>
    <lineage>
        <taxon>Viruses</taxon>
        <taxon>Riboviria</taxon>
        <taxon>Orthornavirae</taxon>
        <taxon>Negarnaviricota</taxon>
        <taxon>Polyploviricotina</taxon>
        <taxon>Insthoviricetes</taxon>
        <taxon>Articulavirales</taxon>
        <taxon>Orthomyxoviridae</taxon>
        <taxon>Alphainfluenzavirus</taxon>
        <taxon>Alphainfluenzavirus influenzae</taxon>
        <taxon>Influenza A virus</taxon>
    </lineage>
</organism>
<protein>
    <recommendedName>
        <fullName evidence="1">Polymerase basic protein 2</fullName>
    </recommendedName>
    <alternativeName>
        <fullName evidence="1">RNA-directed RNA polymerase subunit P3</fullName>
    </alternativeName>
</protein>
<accession>P31345</accession>